<name>LDH2_STAAR</name>
<comment type="function">
    <text evidence="1 2">Catalyzes the conversion of lactate to pyruvate (Potential). Contributes to S.aureus growth during nitrosative stress in both aerobically and anaerobically cultured cells, despite playing a secondary role in this resistance mechanism (By similarity).</text>
</comment>
<comment type="catalytic activity">
    <reaction evidence="2">
        <text>(S)-lactate + NAD(+) = pyruvate + NADH + H(+)</text>
        <dbReference type="Rhea" id="RHEA:23444"/>
        <dbReference type="ChEBI" id="CHEBI:15361"/>
        <dbReference type="ChEBI" id="CHEBI:15378"/>
        <dbReference type="ChEBI" id="CHEBI:16651"/>
        <dbReference type="ChEBI" id="CHEBI:57540"/>
        <dbReference type="ChEBI" id="CHEBI:57945"/>
        <dbReference type="EC" id="1.1.1.27"/>
    </reaction>
</comment>
<comment type="pathway">
    <text evidence="2">Fermentation; pyruvate fermentation to lactate; (S)-lactate from pyruvate: step 1/1.</text>
</comment>
<comment type="subunit">
    <text evidence="2">Homotetramer.</text>
</comment>
<comment type="subcellular location">
    <subcellularLocation>
        <location evidence="2">Cytoplasm</location>
    </subcellularLocation>
</comment>
<comment type="similarity">
    <text evidence="2 3">Belongs to the LDH/MDH superfamily. LDH family.</text>
</comment>
<proteinExistence type="inferred from homology"/>
<accession>Q6GDK1</accession>
<feature type="chain" id="PRO_0000168384" description="L-lactate dehydrogenase 2">
    <location>
        <begin position="1"/>
        <end position="319"/>
    </location>
</feature>
<feature type="active site" description="Proton acceptor" evidence="2">
    <location>
        <position position="178"/>
    </location>
</feature>
<feature type="binding site" evidence="2">
    <location>
        <position position="16"/>
    </location>
    <ligand>
        <name>NAD(+)</name>
        <dbReference type="ChEBI" id="CHEBI:57540"/>
    </ligand>
</feature>
<feature type="binding site" evidence="2">
    <location>
        <position position="37"/>
    </location>
    <ligand>
        <name>NAD(+)</name>
        <dbReference type="ChEBI" id="CHEBI:57540"/>
    </ligand>
</feature>
<feature type="binding site" evidence="2">
    <location>
        <position position="42"/>
    </location>
    <ligand>
        <name>NAD(+)</name>
        <dbReference type="ChEBI" id="CHEBI:57540"/>
    </ligand>
</feature>
<feature type="binding site" evidence="2">
    <location>
        <position position="68"/>
    </location>
    <ligand>
        <name>NAD(+)</name>
        <dbReference type="ChEBI" id="CHEBI:57540"/>
    </ligand>
</feature>
<feature type="binding site" evidence="2">
    <location>
        <begin position="82"/>
        <end position="83"/>
    </location>
    <ligand>
        <name>NAD(+)</name>
        <dbReference type="ChEBI" id="CHEBI:57540"/>
    </ligand>
</feature>
<feature type="binding site" evidence="2">
    <location>
        <position position="85"/>
    </location>
    <ligand>
        <name>substrate</name>
    </ligand>
</feature>
<feature type="binding site" evidence="2">
    <location>
        <position position="91"/>
    </location>
    <ligand>
        <name>substrate</name>
    </ligand>
</feature>
<feature type="binding site" evidence="2">
    <location>
        <position position="104"/>
    </location>
    <ligand>
        <name>NAD(+)</name>
        <dbReference type="ChEBI" id="CHEBI:57540"/>
    </ligand>
</feature>
<feature type="binding site" evidence="2">
    <location>
        <begin position="121"/>
        <end position="123"/>
    </location>
    <ligand>
        <name>NAD(+)</name>
        <dbReference type="ChEBI" id="CHEBI:57540"/>
    </ligand>
</feature>
<feature type="binding site" evidence="2">
    <location>
        <begin position="123"/>
        <end position="126"/>
    </location>
    <ligand>
        <name>substrate</name>
    </ligand>
</feature>
<feature type="binding site" evidence="2">
    <location>
        <position position="146"/>
    </location>
    <ligand>
        <name>NAD(+)</name>
        <dbReference type="ChEBI" id="CHEBI:57540"/>
    </ligand>
</feature>
<feature type="binding site" evidence="2">
    <location>
        <begin position="151"/>
        <end position="154"/>
    </location>
    <ligand>
        <name>substrate</name>
    </ligand>
</feature>
<feature type="binding site" evidence="2">
    <location>
        <position position="231"/>
    </location>
    <ligand>
        <name>substrate</name>
    </ligand>
</feature>
<feature type="modified residue" description="Phosphotyrosine" evidence="2">
    <location>
        <position position="222"/>
    </location>
</feature>
<organism>
    <name type="scientific">Staphylococcus aureus (strain MRSA252)</name>
    <dbReference type="NCBI Taxonomy" id="282458"/>
    <lineage>
        <taxon>Bacteria</taxon>
        <taxon>Bacillati</taxon>
        <taxon>Bacillota</taxon>
        <taxon>Bacilli</taxon>
        <taxon>Bacillales</taxon>
        <taxon>Staphylococcaceae</taxon>
        <taxon>Staphylococcus</taxon>
    </lineage>
</organism>
<dbReference type="EC" id="1.1.1.27" evidence="2"/>
<dbReference type="EMBL" id="BX571856">
    <property type="protein sequence ID" value="CAG41657.1"/>
    <property type="molecule type" value="Genomic_DNA"/>
</dbReference>
<dbReference type="RefSeq" id="WP_000846637.1">
    <property type="nucleotide sequence ID" value="NC_002952.2"/>
</dbReference>
<dbReference type="SMR" id="Q6GDK1"/>
<dbReference type="KEGG" id="sar:SAR2680"/>
<dbReference type="HOGENOM" id="CLU_045401_1_1_9"/>
<dbReference type="UniPathway" id="UPA00554">
    <property type="reaction ID" value="UER00611"/>
</dbReference>
<dbReference type="Proteomes" id="UP000000596">
    <property type="component" value="Chromosome"/>
</dbReference>
<dbReference type="GO" id="GO:0005737">
    <property type="term" value="C:cytoplasm"/>
    <property type="evidence" value="ECO:0007669"/>
    <property type="project" value="UniProtKB-SubCell"/>
</dbReference>
<dbReference type="GO" id="GO:0004459">
    <property type="term" value="F:L-lactate dehydrogenase activity"/>
    <property type="evidence" value="ECO:0007669"/>
    <property type="project" value="UniProtKB-UniRule"/>
</dbReference>
<dbReference type="GO" id="GO:0006096">
    <property type="term" value="P:glycolytic process"/>
    <property type="evidence" value="ECO:0007669"/>
    <property type="project" value="UniProtKB-UniRule"/>
</dbReference>
<dbReference type="GO" id="GO:0006089">
    <property type="term" value="P:lactate metabolic process"/>
    <property type="evidence" value="ECO:0007669"/>
    <property type="project" value="TreeGrafter"/>
</dbReference>
<dbReference type="CDD" id="cd05291">
    <property type="entry name" value="HicDH_like"/>
    <property type="match status" value="1"/>
</dbReference>
<dbReference type="FunFam" id="3.40.50.720:FF:000018">
    <property type="entry name" value="Malate dehydrogenase"/>
    <property type="match status" value="1"/>
</dbReference>
<dbReference type="Gene3D" id="3.90.110.10">
    <property type="entry name" value="Lactate dehydrogenase/glycoside hydrolase, family 4, C-terminal"/>
    <property type="match status" value="1"/>
</dbReference>
<dbReference type="Gene3D" id="3.40.50.720">
    <property type="entry name" value="NAD(P)-binding Rossmann-like Domain"/>
    <property type="match status" value="1"/>
</dbReference>
<dbReference type="HAMAP" id="MF_00488">
    <property type="entry name" value="Lactate_dehydrog"/>
    <property type="match status" value="1"/>
</dbReference>
<dbReference type="InterPro" id="IPR001557">
    <property type="entry name" value="L-lactate/malate_DH"/>
</dbReference>
<dbReference type="InterPro" id="IPR011304">
    <property type="entry name" value="L-lactate_DH"/>
</dbReference>
<dbReference type="InterPro" id="IPR018177">
    <property type="entry name" value="L-lactate_DH_AS"/>
</dbReference>
<dbReference type="InterPro" id="IPR022383">
    <property type="entry name" value="Lactate/malate_DH_C"/>
</dbReference>
<dbReference type="InterPro" id="IPR001236">
    <property type="entry name" value="Lactate/malate_DH_N"/>
</dbReference>
<dbReference type="InterPro" id="IPR015955">
    <property type="entry name" value="Lactate_DH/Glyco_Ohase_4_C"/>
</dbReference>
<dbReference type="InterPro" id="IPR036291">
    <property type="entry name" value="NAD(P)-bd_dom_sf"/>
</dbReference>
<dbReference type="NCBIfam" id="TIGR01771">
    <property type="entry name" value="L-LDH-NAD"/>
    <property type="match status" value="1"/>
</dbReference>
<dbReference type="NCBIfam" id="NF000824">
    <property type="entry name" value="PRK00066.1"/>
    <property type="match status" value="1"/>
</dbReference>
<dbReference type="PANTHER" id="PTHR43128">
    <property type="entry name" value="L-2-HYDROXYCARBOXYLATE DEHYDROGENASE (NAD(P)(+))"/>
    <property type="match status" value="1"/>
</dbReference>
<dbReference type="PANTHER" id="PTHR43128:SF16">
    <property type="entry name" value="L-LACTATE DEHYDROGENASE"/>
    <property type="match status" value="1"/>
</dbReference>
<dbReference type="Pfam" id="PF02866">
    <property type="entry name" value="Ldh_1_C"/>
    <property type="match status" value="1"/>
</dbReference>
<dbReference type="Pfam" id="PF00056">
    <property type="entry name" value="Ldh_1_N"/>
    <property type="match status" value="1"/>
</dbReference>
<dbReference type="PIRSF" id="PIRSF000102">
    <property type="entry name" value="Lac_mal_DH"/>
    <property type="match status" value="1"/>
</dbReference>
<dbReference type="PRINTS" id="PR00086">
    <property type="entry name" value="LLDHDRGNASE"/>
</dbReference>
<dbReference type="SUPFAM" id="SSF56327">
    <property type="entry name" value="LDH C-terminal domain-like"/>
    <property type="match status" value="1"/>
</dbReference>
<dbReference type="SUPFAM" id="SSF51735">
    <property type="entry name" value="NAD(P)-binding Rossmann-fold domains"/>
    <property type="match status" value="1"/>
</dbReference>
<dbReference type="PROSITE" id="PS00064">
    <property type="entry name" value="L_LDH"/>
    <property type="match status" value="1"/>
</dbReference>
<keyword id="KW-0963">Cytoplasm</keyword>
<keyword id="KW-0520">NAD</keyword>
<keyword id="KW-0560">Oxidoreductase</keyword>
<keyword id="KW-0597">Phosphoprotein</keyword>
<keyword id="KW-0346">Stress response</keyword>
<reference key="1">
    <citation type="journal article" date="2004" name="Proc. Natl. Acad. Sci. U.S.A.">
        <title>Complete genomes of two clinical Staphylococcus aureus strains: evidence for the rapid evolution of virulence and drug resistance.</title>
        <authorList>
            <person name="Holden M.T.G."/>
            <person name="Feil E.J."/>
            <person name="Lindsay J.A."/>
            <person name="Peacock S.J."/>
            <person name="Day N.P.J."/>
            <person name="Enright M.C."/>
            <person name="Foster T.J."/>
            <person name="Moore C.E."/>
            <person name="Hurst L."/>
            <person name="Atkin R."/>
            <person name="Barron A."/>
            <person name="Bason N."/>
            <person name="Bentley S.D."/>
            <person name="Chillingworth C."/>
            <person name="Chillingworth T."/>
            <person name="Churcher C."/>
            <person name="Clark L."/>
            <person name="Corton C."/>
            <person name="Cronin A."/>
            <person name="Doggett J."/>
            <person name="Dowd L."/>
            <person name="Feltwell T."/>
            <person name="Hance Z."/>
            <person name="Harris B."/>
            <person name="Hauser H."/>
            <person name="Holroyd S."/>
            <person name="Jagels K."/>
            <person name="James K.D."/>
            <person name="Lennard N."/>
            <person name="Line A."/>
            <person name="Mayes R."/>
            <person name="Moule S."/>
            <person name="Mungall K."/>
            <person name="Ormond D."/>
            <person name="Quail M.A."/>
            <person name="Rabbinowitsch E."/>
            <person name="Rutherford K.M."/>
            <person name="Sanders M."/>
            <person name="Sharp S."/>
            <person name="Simmonds M."/>
            <person name="Stevens K."/>
            <person name="Whitehead S."/>
            <person name="Barrell B.G."/>
            <person name="Spratt B.G."/>
            <person name="Parkhill J."/>
        </authorList>
    </citation>
    <scope>NUCLEOTIDE SEQUENCE [LARGE SCALE GENOMIC DNA]</scope>
    <source>
        <strain>MRSA252</strain>
    </source>
</reference>
<protein>
    <recommendedName>
        <fullName evidence="2">L-lactate dehydrogenase 2</fullName>
        <shortName evidence="2">L-LDH 2</shortName>
        <ecNumber evidence="2">1.1.1.27</ecNumber>
    </recommendedName>
</protein>
<evidence type="ECO:0000250" key="1">
    <source>
        <dbReference type="UniProtKB" id="Q5HCV0"/>
    </source>
</evidence>
<evidence type="ECO:0000255" key="2">
    <source>
        <dbReference type="HAMAP-Rule" id="MF_00488"/>
    </source>
</evidence>
<evidence type="ECO:0000305" key="3"/>
<sequence>MKTFGKKVVLIGDGSVGSSYAFAMVTQGVADEFVIIDIAKDKVKADVQDLNHGTVHSPSPVDVKAGEYEDCKDADLVVITAGAPQKPGETRLQLVEKNTKIMKSIVKSVMDSGFDGYFLIAANPVDILTRFVKEYTGLPAERVIGSGTVLDSARLQYLISQELGVAPSSVDASIIGEHGDTELAVWSQANVAGISVYDTLKEQTGSEAKAEEIYVNTRDAAYEIIQAKGSTYYGIALALMRISKAILNNENNVLNVSIQLDGQYGGHKGVYLGVPTLVNQHGAVKIYEMPLSAEEQALFDKSVKTLEDTFDSIKYLLED</sequence>
<gene>
    <name evidence="2" type="primary">ldh2</name>
    <name type="ordered locus">SAR2680</name>
</gene>